<sequence>MDATAFPYGLRVLVVDDDPTWLKILEKMLRKCSYEVTTCGLARVALDILRERKNKFDIVISDVNMPDMDGFKLLEHIGLEMDLPVIMMSIDGETSRVMKGVQHGACDYLLKPVRMKELRNIWQHVYRKKMHEVKEIEGNDSCDDLQILRNSFEGLDEKSLFMRSDSDTMRKRKDVDKDHADQESSDGNTVKKARVVWSVDLHQKFVNAVNQIGFDKVGPKKILDLMNVPGLTRENVASHLQKYRLYLSRLQKQNEERILGAARQDFSHKGTSENLNLRSSFQEQPSNIANGYPHASQNIQTQANMLDSQLEDTKSTVPLPVPDKKRTLASDAADSQNVTSASSLGGVLSFKSMPVNQDRKPSETMILECQAWTGGIPSKQFMQYPKHNHERCDLLGDYSCLPKPDLEHPVGPSNLYAPPPLISMSCGMEGDARDFSDVKPAIMDCIKSLSPALTCTVDSVSVQLSDSVVTSIDGDLKSSGVDGLPSIKDCCLDQTNSQGSLRPSQEPSIIGSTELASLPEDLPSYPLHGVSLENIGLSSIDLLNYSDAMILSGLQSNWYDDLEFSSEMMDYPSIDECLFASS</sequence>
<feature type="chain" id="PRO_0000433849" description="Two-component response regulator ORR26">
    <location>
        <begin position="1"/>
        <end position="582"/>
    </location>
</feature>
<feature type="domain" description="Response regulatory" evidence="2">
    <location>
        <begin position="11"/>
        <end position="126"/>
    </location>
</feature>
<feature type="DNA-binding region" description="Myb-like GARP" evidence="3">
    <location>
        <begin position="189"/>
        <end position="248"/>
    </location>
</feature>
<feature type="region of interest" description="Disordered" evidence="4">
    <location>
        <begin position="166"/>
        <end position="187"/>
    </location>
</feature>
<feature type="compositionally biased region" description="Basic and acidic residues" evidence="4">
    <location>
        <begin position="166"/>
        <end position="182"/>
    </location>
</feature>
<feature type="modified residue" description="4-aspartylphosphate" evidence="2">
    <location>
        <position position="62"/>
    </location>
</feature>
<reference key="1">
    <citation type="journal article" date="2006" name="Gene">
        <title>Identification and characterization of cytokinin-signalling gene families in rice.</title>
        <authorList>
            <person name="Ito Y."/>
            <person name="Kurata N."/>
        </authorList>
    </citation>
    <scope>NUCLEOTIDE SEQUENCE [GENOMIC DNA]</scope>
    <source>
        <strain>cv. Nipponbare</strain>
    </source>
</reference>
<reference key="2">
    <citation type="journal article" date="2002" name="Nature">
        <title>The genome sequence and structure of rice chromosome 1.</title>
        <authorList>
            <person name="Sasaki T."/>
            <person name="Matsumoto T."/>
            <person name="Yamamoto K."/>
            <person name="Sakata K."/>
            <person name="Baba T."/>
            <person name="Katayose Y."/>
            <person name="Wu J."/>
            <person name="Niimura Y."/>
            <person name="Cheng Z."/>
            <person name="Nagamura Y."/>
            <person name="Antonio B.A."/>
            <person name="Kanamori H."/>
            <person name="Hosokawa S."/>
            <person name="Masukawa M."/>
            <person name="Arikawa K."/>
            <person name="Chiden Y."/>
            <person name="Hayashi M."/>
            <person name="Okamoto M."/>
            <person name="Ando T."/>
            <person name="Aoki H."/>
            <person name="Arita K."/>
            <person name="Hamada M."/>
            <person name="Harada C."/>
            <person name="Hijishita S."/>
            <person name="Honda M."/>
            <person name="Ichikawa Y."/>
            <person name="Idonuma A."/>
            <person name="Iijima M."/>
            <person name="Ikeda M."/>
            <person name="Ikeno M."/>
            <person name="Ito S."/>
            <person name="Ito T."/>
            <person name="Ito Y."/>
            <person name="Ito Y."/>
            <person name="Iwabuchi A."/>
            <person name="Kamiya K."/>
            <person name="Karasawa W."/>
            <person name="Katagiri S."/>
            <person name="Kikuta A."/>
            <person name="Kobayashi N."/>
            <person name="Kono I."/>
            <person name="Machita K."/>
            <person name="Maehara T."/>
            <person name="Mizuno H."/>
            <person name="Mizubayashi T."/>
            <person name="Mukai Y."/>
            <person name="Nagasaki H."/>
            <person name="Nakashima M."/>
            <person name="Nakama Y."/>
            <person name="Nakamichi Y."/>
            <person name="Nakamura M."/>
            <person name="Namiki N."/>
            <person name="Negishi M."/>
            <person name="Ohta I."/>
            <person name="Ono N."/>
            <person name="Saji S."/>
            <person name="Sakai K."/>
            <person name="Shibata M."/>
            <person name="Shimokawa T."/>
            <person name="Shomura A."/>
            <person name="Song J."/>
            <person name="Takazaki Y."/>
            <person name="Terasawa K."/>
            <person name="Tsuji K."/>
            <person name="Waki K."/>
            <person name="Yamagata H."/>
            <person name="Yamane H."/>
            <person name="Yoshiki S."/>
            <person name="Yoshihara R."/>
            <person name="Yukawa K."/>
            <person name="Zhong H."/>
            <person name="Iwama H."/>
            <person name="Endo T."/>
            <person name="Ito H."/>
            <person name="Hahn J.H."/>
            <person name="Kim H.-I."/>
            <person name="Eun M.-Y."/>
            <person name="Yano M."/>
            <person name="Jiang J."/>
            <person name="Gojobori T."/>
        </authorList>
    </citation>
    <scope>NUCLEOTIDE SEQUENCE [LARGE SCALE GENOMIC DNA]</scope>
    <source>
        <strain>cv. Nipponbare</strain>
    </source>
</reference>
<reference key="3">
    <citation type="journal article" date="2005" name="Nature">
        <title>The map-based sequence of the rice genome.</title>
        <authorList>
            <consortium name="International rice genome sequencing project (IRGSP)"/>
        </authorList>
    </citation>
    <scope>NUCLEOTIDE SEQUENCE [LARGE SCALE GENOMIC DNA]</scope>
    <source>
        <strain>cv. Nipponbare</strain>
    </source>
</reference>
<reference key="4">
    <citation type="journal article" date="2008" name="Nucleic Acids Res.">
        <title>The rice annotation project database (RAP-DB): 2008 update.</title>
        <authorList>
            <consortium name="The rice annotation project (RAP)"/>
        </authorList>
    </citation>
    <scope>GENOME REANNOTATION</scope>
    <source>
        <strain>cv. Nipponbare</strain>
    </source>
</reference>
<reference key="5">
    <citation type="journal article" date="2013" name="Rice">
        <title>Improvement of the Oryza sativa Nipponbare reference genome using next generation sequence and optical map data.</title>
        <authorList>
            <person name="Kawahara Y."/>
            <person name="de la Bastide M."/>
            <person name="Hamilton J.P."/>
            <person name="Kanamori H."/>
            <person name="McCombie W.R."/>
            <person name="Ouyang S."/>
            <person name="Schwartz D.C."/>
            <person name="Tanaka T."/>
            <person name="Wu J."/>
            <person name="Zhou S."/>
            <person name="Childs K.L."/>
            <person name="Davidson R.M."/>
            <person name="Lin H."/>
            <person name="Quesada-Ocampo L."/>
            <person name="Vaillancourt B."/>
            <person name="Sakai H."/>
            <person name="Lee S.S."/>
            <person name="Kim J."/>
            <person name="Numa H."/>
            <person name="Itoh T."/>
            <person name="Buell C.R."/>
            <person name="Matsumoto T."/>
        </authorList>
    </citation>
    <scope>GENOME REANNOTATION</scope>
    <source>
        <strain>cv. Nipponbare</strain>
    </source>
</reference>
<reference key="6">
    <citation type="journal article" date="2005" name="PLoS Biol.">
        <title>The genomes of Oryza sativa: a history of duplications.</title>
        <authorList>
            <person name="Yu J."/>
            <person name="Wang J."/>
            <person name="Lin W."/>
            <person name="Li S."/>
            <person name="Li H."/>
            <person name="Zhou J."/>
            <person name="Ni P."/>
            <person name="Dong W."/>
            <person name="Hu S."/>
            <person name="Zeng C."/>
            <person name="Zhang J."/>
            <person name="Zhang Y."/>
            <person name="Li R."/>
            <person name="Xu Z."/>
            <person name="Li S."/>
            <person name="Li X."/>
            <person name="Zheng H."/>
            <person name="Cong L."/>
            <person name="Lin L."/>
            <person name="Yin J."/>
            <person name="Geng J."/>
            <person name="Li G."/>
            <person name="Shi J."/>
            <person name="Liu J."/>
            <person name="Lv H."/>
            <person name="Li J."/>
            <person name="Wang J."/>
            <person name="Deng Y."/>
            <person name="Ran L."/>
            <person name="Shi X."/>
            <person name="Wang X."/>
            <person name="Wu Q."/>
            <person name="Li C."/>
            <person name="Ren X."/>
            <person name="Wang J."/>
            <person name="Wang X."/>
            <person name="Li D."/>
            <person name="Liu D."/>
            <person name="Zhang X."/>
            <person name="Ji Z."/>
            <person name="Zhao W."/>
            <person name="Sun Y."/>
            <person name="Zhang Z."/>
            <person name="Bao J."/>
            <person name="Han Y."/>
            <person name="Dong L."/>
            <person name="Ji J."/>
            <person name="Chen P."/>
            <person name="Wu S."/>
            <person name="Liu J."/>
            <person name="Xiao Y."/>
            <person name="Bu D."/>
            <person name="Tan J."/>
            <person name="Yang L."/>
            <person name="Ye C."/>
            <person name="Zhang J."/>
            <person name="Xu J."/>
            <person name="Zhou Y."/>
            <person name="Yu Y."/>
            <person name="Zhang B."/>
            <person name="Zhuang S."/>
            <person name="Wei H."/>
            <person name="Liu B."/>
            <person name="Lei M."/>
            <person name="Yu H."/>
            <person name="Li Y."/>
            <person name="Xu H."/>
            <person name="Wei S."/>
            <person name="He X."/>
            <person name="Fang L."/>
            <person name="Zhang Z."/>
            <person name="Zhang Y."/>
            <person name="Huang X."/>
            <person name="Su Z."/>
            <person name="Tong W."/>
            <person name="Li J."/>
            <person name="Tong Z."/>
            <person name="Li S."/>
            <person name="Ye J."/>
            <person name="Wang L."/>
            <person name="Fang L."/>
            <person name="Lei T."/>
            <person name="Chen C.-S."/>
            <person name="Chen H.-C."/>
            <person name="Xu Z."/>
            <person name="Li H."/>
            <person name="Huang H."/>
            <person name="Zhang F."/>
            <person name="Xu H."/>
            <person name="Li N."/>
            <person name="Zhao C."/>
            <person name="Li S."/>
            <person name="Dong L."/>
            <person name="Huang Y."/>
            <person name="Li L."/>
            <person name="Xi Y."/>
            <person name="Qi Q."/>
            <person name="Li W."/>
            <person name="Zhang B."/>
            <person name="Hu W."/>
            <person name="Zhang Y."/>
            <person name="Tian X."/>
            <person name="Jiao Y."/>
            <person name="Liang X."/>
            <person name="Jin J."/>
            <person name="Gao L."/>
            <person name="Zheng W."/>
            <person name="Hao B."/>
            <person name="Liu S.-M."/>
            <person name="Wang W."/>
            <person name="Yuan L."/>
            <person name="Cao M."/>
            <person name="McDermott J."/>
            <person name="Samudrala R."/>
            <person name="Wang J."/>
            <person name="Wong G.K.-S."/>
            <person name="Yang H."/>
        </authorList>
    </citation>
    <scope>NUCLEOTIDE SEQUENCE [LARGE SCALE GENOMIC DNA]</scope>
    <source>
        <strain>cv. Nipponbare</strain>
    </source>
</reference>
<reference key="7">
    <citation type="journal article" date="2006" name="Plant Physiol.">
        <title>Whole-genome analysis of Oryza sativa reveals similar architecture of two-component signaling machinery with Arabidopsis.</title>
        <authorList>
            <person name="Pareek A."/>
            <person name="Singh A."/>
            <person name="Kumar M."/>
            <person name="Kushwaha H.R."/>
            <person name="Lynn A.M."/>
            <person name="Singla-Pareek S.L."/>
        </authorList>
    </citation>
    <scope>DISRUPTION PHENOTYPE</scope>
</reference>
<reference key="8">
    <citation type="journal article" date="2007" name="Plant Physiol.">
        <title>Nomenclature for two-component signaling elements of rice.</title>
        <authorList>
            <person name="Schaller G.E."/>
            <person name="Doi K."/>
            <person name="Hwang I."/>
            <person name="Kieber J.J."/>
            <person name="Khurana J.P."/>
            <person name="Kurata N."/>
            <person name="Mizuno T."/>
            <person name="Pareek A."/>
            <person name="Shiu S.H."/>
            <person name="Wu P."/>
            <person name="Yip W.K."/>
        </authorList>
    </citation>
    <scope>GENE FAMILY</scope>
    <scope>NOMENCLATURE</scope>
</reference>
<proteinExistence type="inferred from homology"/>
<protein>
    <recommendedName>
        <fullName evidence="9">Two-component response regulator ORR26</fullName>
    </recommendedName>
    <alternativeName>
        <fullName evidence="6">OsRRB6</fullName>
    </alternativeName>
</protein>
<accession>Q5N6V8</accession>
<accession>A0A0P0VBQ4</accession>
<accession>A1A6A7</accession>
<accession>Q0JGT9</accession>
<comment type="function">
    <text evidence="1">Transcriptional activator that binds specific DNA sequence. Functions as a response regulator involved in His-to-Asp phosphorelay signal transduction system. Phosphorylation of the Asp residue in the receiver domain activates the ability of the protein to promote the transcription of target genes. May directly activate some type-A response regulators in response to cytokinins.</text>
</comment>
<comment type="subcellular location">
    <subcellularLocation>
        <location evidence="3">Nucleus</location>
    </subcellularLocation>
</comment>
<comment type="PTM">
    <text evidence="9">Two-component system major event consists of a His-to-Asp phosphorelay between a sensor histidine kinase (HK) and a response regulator (RR). In plants, the His-to-Asp phosphorelay involves an additional intermediate named Histidine-containing phosphotransfer protein (HPt). This multistep phosphorelay consists of a His-Asp-His-Asp sequential transfer of a phosphate group between first a His and an Asp of the HK protein, followed by the transfer to a conserved His of the HPt protein and finally the transfer to an Asp in the receiver domain of the RR protein.</text>
</comment>
<comment type="disruption phenotype">
    <text evidence="5">Dwarf, narrow leaf, low tillering, late heading and low fertility phenotypes.</text>
</comment>
<comment type="similarity">
    <text evidence="9">Belongs to the ARR family. Type-B subfamily.</text>
</comment>
<comment type="sequence caution" evidence="9">
    <conflict type="erroneous gene model prediction">
        <sequence resource="EMBL-CDS" id="BAD82798"/>
    </conflict>
</comment>
<comment type="sequence caution" evidence="9">
    <conflict type="erroneous gene model prediction">
        <sequence resource="EMBL-CDS" id="BAF07039"/>
    </conflict>
</comment>
<keyword id="KW-0010">Activator</keyword>
<keyword id="KW-0932">Cytokinin signaling pathway</keyword>
<keyword id="KW-0238">DNA-binding</keyword>
<keyword id="KW-0539">Nucleus</keyword>
<keyword id="KW-0597">Phosphoprotein</keyword>
<keyword id="KW-1185">Reference proteome</keyword>
<keyword id="KW-0804">Transcription</keyword>
<keyword id="KW-0805">Transcription regulation</keyword>
<keyword id="KW-0902">Two-component regulatory system</keyword>
<name>ORR26_ORYSJ</name>
<gene>
    <name evidence="8" type="primary">RR26</name>
    <name evidence="7" type="synonym">ORR6</name>
    <name evidence="11" type="ordered locus">Os01g0904700</name>
    <name evidence="9" type="ordered locus">LOC_Os01g67770</name>
    <name evidence="12" type="ORF">OsJ_04457</name>
    <name evidence="10" type="ORF">OSJNOa013M08.3</name>
</gene>
<evidence type="ECO:0000250" key="1">
    <source>
        <dbReference type="UniProtKB" id="Q940D0"/>
    </source>
</evidence>
<evidence type="ECO:0000255" key="2">
    <source>
        <dbReference type="PROSITE-ProRule" id="PRU00169"/>
    </source>
</evidence>
<evidence type="ECO:0000255" key="3">
    <source>
        <dbReference type="PROSITE-ProRule" id="PRU00625"/>
    </source>
</evidence>
<evidence type="ECO:0000256" key="4">
    <source>
        <dbReference type="SAM" id="MobiDB-lite"/>
    </source>
</evidence>
<evidence type="ECO:0000269" key="5">
    <source>
    </source>
</evidence>
<evidence type="ECO:0000303" key="6">
    <source>
    </source>
</evidence>
<evidence type="ECO:0000303" key="7">
    <source>
    </source>
</evidence>
<evidence type="ECO:0000303" key="8">
    <source>
    </source>
</evidence>
<evidence type="ECO:0000305" key="9"/>
<evidence type="ECO:0000312" key="10">
    <source>
        <dbReference type="EMBL" id="BAD82798.1"/>
    </source>
</evidence>
<evidence type="ECO:0000312" key="11">
    <source>
        <dbReference type="EMBL" id="BAF07039.2"/>
    </source>
</evidence>
<evidence type="ECO:0000312" key="12">
    <source>
        <dbReference type="EMBL" id="EEE55842.1"/>
    </source>
</evidence>
<organism>
    <name type="scientific">Oryza sativa subsp. japonica</name>
    <name type="common">Rice</name>
    <dbReference type="NCBI Taxonomy" id="39947"/>
    <lineage>
        <taxon>Eukaryota</taxon>
        <taxon>Viridiplantae</taxon>
        <taxon>Streptophyta</taxon>
        <taxon>Embryophyta</taxon>
        <taxon>Tracheophyta</taxon>
        <taxon>Spermatophyta</taxon>
        <taxon>Magnoliopsida</taxon>
        <taxon>Liliopsida</taxon>
        <taxon>Poales</taxon>
        <taxon>Poaceae</taxon>
        <taxon>BOP clade</taxon>
        <taxon>Oryzoideae</taxon>
        <taxon>Oryzeae</taxon>
        <taxon>Oryzinae</taxon>
        <taxon>Oryza</taxon>
        <taxon>Oryza sativa</taxon>
    </lineage>
</organism>
<dbReference type="EMBL" id="BR000255">
    <property type="protein sequence ID" value="FAA00259.1"/>
    <property type="molecule type" value="Genomic_DNA"/>
</dbReference>
<dbReference type="EMBL" id="AP006838">
    <property type="protein sequence ID" value="BAD82798.1"/>
    <property type="status" value="ALT_SEQ"/>
    <property type="molecule type" value="Genomic_DNA"/>
</dbReference>
<dbReference type="EMBL" id="AP008207">
    <property type="protein sequence ID" value="BAF07039.2"/>
    <property type="status" value="ALT_SEQ"/>
    <property type="molecule type" value="Genomic_DNA"/>
</dbReference>
<dbReference type="EMBL" id="AP014957">
    <property type="protein sequence ID" value="BAS75781.1"/>
    <property type="molecule type" value="Genomic_DNA"/>
</dbReference>
<dbReference type="EMBL" id="CM000138">
    <property type="protein sequence ID" value="EEE55842.1"/>
    <property type="molecule type" value="Genomic_DNA"/>
</dbReference>
<dbReference type="SMR" id="Q5N6V8"/>
<dbReference type="FunCoup" id="Q5N6V8">
    <property type="interactions" value="455"/>
</dbReference>
<dbReference type="STRING" id="39947.Q5N6V8"/>
<dbReference type="PaxDb" id="39947-Q5N6V8"/>
<dbReference type="EnsemblPlants" id="Os01t0904700-01">
    <property type="protein sequence ID" value="Os01t0904700-01"/>
    <property type="gene ID" value="Os01g0904700"/>
</dbReference>
<dbReference type="GeneID" id="4325022"/>
<dbReference type="Gramene" id="Os01t0904700-01">
    <property type="protein sequence ID" value="Os01t0904700-01"/>
    <property type="gene ID" value="Os01g0904700"/>
</dbReference>
<dbReference type="KEGG" id="dosa:Os01g0904700"/>
<dbReference type="KEGG" id="osa:4325022"/>
<dbReference type="eggNOG" id="KOG1601">
    <property type="taxonomic scope" value="Eukaryota"/>
</dbReference>
<dbReference type="InParanoid" id="Q5N6V8"/>
<dbReference type="OMA" id="ETMIMEC"/>
<dbReference type="OrthoDB" id="60033at2759"/>
<dbReference type="Proteomes" id="UP000000763">
    <property type="component" value="Chromosome 1"/>
</dbReference>
<dbReference type="Proteomes" id="UP000007752">
    <property type="component" value="Chromosome 1"/>
</dbReference>
<dbReference type="Proteomes" id="UP000059680">
    <property type="component" value="Chromosome 1"/>
</dbReference>
<dbReference type="GO" id="GO:0005634">
    <property type="term" value="C:nucleus"/>
    <property type="evidence" value="ECO:0000318"/>
    <property type="project" value="GO_Central"/>
</dbReference>
<dbReference type="GO" id="GO:0003677">
    <property type="term" value="F:DNA binding"/>
    <property type="evidence" value="ECO:0007669"/>
    <property type="project" value="UniProtKB-KW"/>
</dbReference>
<dbReference type="GO" id="GO:0003700">
    <property type="term" value="F:DNA-binding transcription factor activity"/>
    <property type="evidence" value="ECO:0000318"/>
    <property type="project" value="GO_Central"/>
</dbReference>
<dbReference type="GO" id="GO:0009736">
    <property type="term" value="P:cytokinin-activated signaling pathway"/>
    <property type="evidence" value="ECO:0007669"/>
    <property type="project" value="UniProtKB-KW"/>
</dbReference>
<dbReference type="GO" id="GO:0000160">
    <property type="term" value="P:phosphorelay signal transduction system"/>
    <property type="evidence" value="ECO:0007669"/>
    <property type="project" value="UniProtKB-KW"/>
</dbReference>
<dbReference type="CDD" id="cd17584">
    <property type="entry name" value="REC_typeB_ARR-like"/>
    <property type="match status" value="1"/>
</dbReference>
<dbReference type="FunFam" id="1.10.10.60:FF:000007">
    <property type="entry name" value="Two-component response regulator"/>
    <property type="match status" value="1"/>
</dbReference>
<dbReference type="FunFam" id="3.40.50.2300:FF:000132">
    <property type="entry name" value="Two-component response regulator"/>
    <property type="match status" value="1"/>
</dbReference>
<dbReference type="Gene3D" id="3.40.50.2300">
    <property type="match status" value="1"/>
</dbReference>
<dbReference type="Gene3D" id="1.10.10.60">
    <property type="entry name" value="Homeodomain-like"/>
    <property type="match status" value="1"/>
</dbReference>
<dbReference type="InterPro" id="IPR045279">
    <property type="entry name" value="ARR-like"/>
</dbReference>
<dbReference type="InterPro" id="IPR011006">
    <property type="entry name" value="CheY-like_superfamily"/>
</dbReference>
<dbReference type="InterPro" id="IPR009057">
    <property type="entry name" value="Homeodomain-like_sf"/>
</dbReference>
<dbReference type="InterPro" id="IPR017930">
    <property type="entry name" value="Myb_dom"/>
</dbReference>
<dbReference type="InterPro" id="IPR006447">
    <property type="entry name" value="Myb_dom_plants"/>
</dbReference>
<dbReference type="InterPro" id="IPR017053">
    <property type="entry name" value="Response_reg_B-typ_pln"/>
</dbReference>
<dbReference type="InterPro" id="IPR001005">
    <property type="entry name" value="SANT/Myb"/>
</dbReference>
<dbReference type="InterPro" id="IPR001789">
    <property type="entry name" value="Sig_transdc_resp-reg_receiver"/>
</dbReference>
<dbReference type="NCBIfam" id="TIGR01557">
    <property type="entry name" value="myb_SHAQKYF"/>
    <property type="match status" value="1"/>
</dbReference>
<dbReference type="PANTHER" id="PTHR43874">
    <property type="entry name" value="TWO-COMPONENT RESPONSE REGULATOR"/>
    <property type="match status" value="1"/>
</dbReference>
<dbReference type="PANTHER" id="PTHR43874:SF137">
    <property type="entry name" value="TWO-COMPONENT RESPONSE REGULATOR ARR11"/>
    <property type="match status" value="1"/>
</dbReference>
<dbReference type="Pfam" id="PF00249">
    <property type="entry name" value="Myb_DNA-binding"/>
    <property type="match status" value="1"/>
</dbReference>
<dbReference type="Pfam" id="PF00072">
    <property type="entry name" value="Response_reg"/>
    <property type="match status" value="1"/>
</dbReference>
<dbReference type="PIRSF" id="PIRSF036392">
    <property type="entry name" value="RR_ARR_type-B"/>
    <property type="match status" value="1"/>
</dbReference>
<dbReference type="SMART" id="SM00448">
    <property type="entry name" value="REC"/>
    <property type="match status" value="1"/>
</dbReference>
<dbReference type="SUPFAM" id="SSF52172">
    <property type="entry name" value="CheY-like"/>
    <property type="match status" value="1"/>
</dbReference>
<dbReference type="SUPFAM" id="SSF46689">
    <property type="entry name" value="Homeodomain-like"/>
    <property type="match status" value="1"/>
</dbReference>
<dbReference type="PROSITE" id="PS51294">
    <property type="entry name" value="HTH_MYB"/>
    <property type="match status" value="1"/>
</dbReference>
<dbReference type="PROSITE" id="PS50110">
    <property type="entry name" value="RESPONSE_REGULATORY"/>
    <property type="match status" value="1"/>
</dbReference>